<sequence>MGDWKVYISAVLRDQRIDDVAIVGHADNSCVWASRPGGLLAAISPQEVGVLTGPDRHTFLQAGLSVGGRRCCVIRDHLLAEGDGVLDARTKGLDARAVCVGRAPRALLVLMGRRGVHGGILNKTVHELIRGLRMQGA</sequence>
<keyword id="KW-0009">Actin-binding</keyword>
<keyword id="KW-0963">Cytoplasm</keyword>
<keyword id="KW-0206">Cytoskeleton</keyword>
<keyword id="KW-0446">Lipid-binding</keyword>
<keyword id="KW-0539">Nucleus</keyword>
<keyword id="KW-1267">Proteomics identification</keyword>
<keyword id="KW-1185">Reference proteome</keyword>
<accession>P60673</accession>
<accession>A2RUL3</accession>
<feature type="chain" id="PRO_0000199579" description="Profilin-3">
    <location>
        <begin position="1"/>
        <end position="137"/>
    </location>
</feature>
<gene>
    <name type="primary">PFN3</name>
</gene>
<name>PROF3_HUMAN</name>
<evidence type="ECO:0000250" key="1"/>
<evidence type="ECO:0000269" key="2">
    <source>
    </source>
</evidence>
<evidence type="ECO:0000305" key="3"/>
<reference key="1">
    <citation type="journal article" date="2002" name="Gene">
        <title>Genomic organization of profilin-III and evidence for a transcript expressed exclusively in testis.</title>
        <authorList>
            <person name="Braun A."/>
            <person name="Aszodi A."/>
            <person name="Hellebrand H."/>
            <person name="Berna A."/>
            <person name="Fassler R."/>
            <person name="Brandau O."/>
        </authorList>
    </citation>
    <scope>NUCLEOTIDE SEQUENCE [GENOMIC DNA]</scope>
</reference>
<reference key="2">
    <citation type="journal article" date="2004" name="Nature">
        <title>The DNA sequence and comparative analysis of human chromosome 5.</title>
        <authorList>
            <person name="Schmutz J."/>
            <person name="Martin J."/>
            <person name="Terry A."/>
            <person name="Couronne O."/>
            <person name="Grimwood J."/>
            <person name="Lowry S."/>
            <person name="Gordon L.A."/>
            <person name="Scott D."/>
            <person name="Xie G."/>
            <person name="Huang W."/>
            <person name="Hellsten U."/>
            <person name="Tran-Gyamfi M."/>
            <person name="She X."/>
            <person name="Prabhakar S."/>
            <person name="Aerts A."/>
            <person name="Altherr M."/>
            <person name="Bajorek E."/>
            <person name="Black S."/>
            <person name="Branscomb E."/>
            <person name="Caoile C."/>
            <person name="Challacombe J.F."/>
            <person name="Chan Y.M."/>
            <person name="Denys M."/>
            <person name="Detter J.C."/>
            <person name="Escobar J."/>
            <person name="Flowers D."/>
            <person name="Fotopulos D."/>
            <person name="Glavina T."/>
            <person name="Gomez M."/>
            <person name="Gonzales E."/>
            <person name="Goodstein D."/>
            <person name="Grigoriev I."/>
            <person name="Groza M."/>
            <person name="Hammon N."/>
            <person name="Hawkins T."/>
            <person name="Haydu L."/>
            <person name="Israni S."/>
            <person name="Jett J."/>
            <person name="Kadner K."/>
            <person name="Kimball H."/>
            <person name="Kobayashi A."/>
            <person name="Lopez F."/>
            <person name="Lou Y."/>
            <person name="Martinez D."/>
            <person name="Medina C."/>
            <person name="Morgan J."/>
            <person name="Nandkeshwar R."/>
            <person name="Noonan J.P."/>
            <person name="Pitluck S."/>
            <person name="Pollard M."/>
            <person name="Predki P."/>
            <person name="Priest J."/>
            <person name="Ramirez L."/>
            <person name="Retterer J."/>
            <person name="Rodriguez A."/>
            <person name="Rogers S."/>
            <person name="Salamov A."/>
            <person name="Salazar A."/>
            <person name="Thayer N."/>
            <person name="Tice H."/>
            <person name="Tsai M."/>
            <person name="Ustaszewska A."/>
            <person name="Vo N."/>
            <person name="Wheeler J."/>
            <person name="Wu K."/>
            <person name="Yang J."/>
            <person name="Dickson M."/>
            <person name="Cheng J.-F."/>
            <person name="Eichler E.E."/>
            <person name="Olsen A."/>
            <person name="Pennacchio L.A."/>
            <person name="Rokhsar D.S."/>
            <person name="Richardson P."/>
            <person name="Lucas S.M."/>
            <person name="Myers R.M."/>
            <person name="Rubin E.M."/>
        </authorList>
    </citation>
    <scope>NUCLEOTIDE SEQUENCE [LARGE SCALE GENOMIC DNA]</scope>
</reference>
<reference key="3">
    <citation type="submission" date="2005-07" db="EMBL/GenBank/DDBJ databases">
        <authorList>
            <person name="Mural R.J."/>
            <person name="Istrail S."/>
            <person name="Sutton G.G."/>
            <person name="Florea L."/>
            <person name="Halpern A.L."/>
            <person name="Mobarry C.M."/>
            <person name="Lippert R."/>
            <person name="Walenz B."/>
            <person name="Shatkay H."/>
            <person name="Dew I."/>
            <person name="Miller J.R."/>
            <person name="Flanigan M.J."/>
            <person name="Edwards N.J."/>
            <person name="Bolanos R."/>
            <person name="Fasulo D."/>
            <person name="Halldorsson B.V."/>
            <person name="Hannenhalli S."/>
            <person name="Turner R."/>
            <person name="Yooseph S."/>
            <person name="Lu F."/>
            <person name="Nusskern D.R."/>
            <person name="Shue B.C."/>
            <person name="Zheng X.H."/>
            <person name="Zhong F."/>
            <person name="Delcher A.L."/>
            <person name="Huson D.H."/>
            <person name="Kravitz S.A."/>
            <person name="Mouchard L."/>
            <person name="Reinert K."/>
            <person name="Remington K.A."/>
            <person name="Clark A.G."/>
            <person name="Waterman M.S."/>
            <person name="Eichler E.E."/>
            <person name="Adams M.D."/>
            <person name="Hunkapiller M.W."/>
            <person name="Myers E.W."/>
            <person name="Venter J.C."/>
        </authorList>
    </citation>
    <scope>NUCLEOTIDE SEQUENCE [LARGE SCALE GENOMIC DNA]</scope>
</reference>
<reference key="4">
    <citation type="journal article" date="2004" name="Genome Res.">
        <title>The status, quality, and expansion of the NIH full-length cDNA project: the Mammalian Gene Collection (MGC).</title>
        <authorList>
            <consortium name="The MGC Project Team"/>
        </authorList>
    </citation>
    <scope>NUCLEOTIDE SEQUENCE [LARGE SCALE MRNA]</scope>
</reference>
<reference key="5">
    <citation type="journal article" date="2009" name="BMC Cell Biol.">
        <title>Testis-expressed profilins 3 and 4 show distinct functional characteristics and localize in the acroplaxome-manchette complex in spermatids.</title>
        <authorList>
            <person name="Behnen M."/>
            <person name="Murk K."/>
            <person name="Kursula P."/>
            <person name="Cappallo-Obermann H."/>
            <person name="Rothkegel M."/>
            <person name="Kierszenbaum A.L."/>
            <person name="Kirchhoff C."/>
        </authorList>
    </citation>
    <scope>FUNCTION</scope>
</reference>
<comment type="function">
    <text evidence="2">Binds to actin and affects the structure of the cytoskeleton. Slightly reduces actin polymerization. Binds to poly-L-proline, phosphatidylinositol 3-phosphate (PtdIns(3)P), phosphatidylinositol 4,5-bisphosphate (PtdIns(4,5)P2) and phosphatidylinositol 4-phosphate (PtdIns(4)P). May be involved in spermatogenesis.</text>
</comment>
<comment type="subunit">
    <text evidence="1">Interacts with ACTRT3.</text>
</comment>
<comment type="subcellular location">
    <subcellularLocation>
        <location evidence="1">Cytoplasm</location>
        <location evidence="1">Cytoskeleton</location>
    </subcellularLocation>
    <subcellularLocation>
        <location evidence="1">Nucleus</location>
    </subcellularLocation>
</comment>
<comment type="tissue specificity">
    <text>Testis specific.</text>
</comment>
<comment type="similarity">
    <text evidence="3">Belongs to the profilin family.</text>
</comment>
<protein>
    <recommendedName>
        <fullName>Profilin-3</fullName>
    </recommendedName>
    <alternativeName>
        <fullName>Profilin III</fullName>
    </alternativeName>
</protein>
<proteinExistence type="evidence at protein level"/>
<dbReference type="EMBL" id="AC090063">
    <property type="status" value="NOT_ANNOTATED_CDS"/>
    <property type="molecule type" value="Genomic_DNA"/>
</dbReference>
<dbReference type="EMBL" id="CH471195">
    <property type="protein sequence ID" value="EAW85006.1"/>
    <property type="molecule type" value="Genomic_DNA"/>
</dbReference>
<dbReference type="EMBL" id="BC132952">
    <property type="protein sequence ID" value="AAI32953.1"/>
    <property type="molecule type" value="mRNA"/>
</dbReference>
<dbReference type="EMBL" id="BC132954">
    <property type="protein sequence ID" value="AAI32955.1"/>
    <property type="molecule type" value="mRNA"/>
</dbReference>
<dbReference type="CCDS" id="CCDS34301.1"/>
<dbReference type="RefSeq" id="NP_001025057.1">
    <property type="nucleotide sequence ID" value="NM_001029886.3"/>
</dbReference>
<dbReference type="SMR" id="P60673"/>
<dbReference type="BioGRID" id="131350">
    <property type="interactions" value="13"/>
</dbReference>
<dbReference type="FunCoup" id="P60673">
    <property type="interactions" value="574"/>
</dbReference>
<dbReference type="IntAct" id="P60673">
    <property type="interactions" value="9"/>
</dbReference>
<dbReference type="STRING" id="9606.ENSP00000351379"/>
<dbReference type="iPTMnet" id="P60673"/>
<dbReference type="PhosphoSitePlus" id="P60673"/>
<dbReference type="BioMuta" id="PFN3"/>
<dbReference type="DMDM" id="48474309"/>
<dbReference type="jPOST" id="P60673"/>
<dbReference type="MassIVE" id="P60673"/>
<dbReference type="PaxDb" id="9606-ENSP00000351379"/>
<dbReference type="PeptideAtlas" id="P60673"/>
<dbReference type="ProteomicsDB" id="57223"/>
<dbReference type="Pumba" id="P60673"/>
<dbReference type="Antibodypedia" id="48836">
    <property type="antibodies" value="25 antibodies from 6 providers"/>
</dbReference>
<dbReference type="DNASU" id="345456"/>
<dbReference type="Ensembl" id="ENST00000358571.3">
    <property type="protein sequence ID" value="ENSP00000351379.2"/>
    <property type="gene ID" value="ENSG00000196570.3"/>
</dbReference>
<dbReference type="GeneID" id="345456"/>
<dbReference type="KEGG" id="hsa:345456"/>
<dbReference type="MANE-Select" id="ENST00000358571.3">
    <property type="protein sequence ID" value="ENSP00000351379.2"/>
    <property type="RefSeq nucleotide sequence ID" value="NM_001029886.3"/>
    <property type="RefSeq protein sequence ID" value="NP_001025057.1"/>
</dbReference>
<dbReference type="UCSC" id="uc003mgl.2">
    <property type="organism name" value="human"/>
</dbReference>
<dbReference type="AGR" id="HGNC:18627"/>
<dbReference type="CTD" id="345456"/>
<dbReference type="DisGeNET" id="345456"/>
<dbReference type="GeneCards" id="PFN3"/>
<dbReference type="HGNC" id="HGNC:18627">
    <property type="gene designation" value="PFN3"/>
</dbReference>
<dbReference type="HPA" id="ENSG00000196570">
    <property type="expression patterns" value="Tissue enriched (testis)"/>
</dbReference>
<dbReference type="MalaCards" id="PFN3"/>
<dbReference type="MIM" id="612812">
    <property type="type" value="gene"/>
</dbReference>
<dbReference type="neXtProt" id="NX_P60673"/>
<dbReference type="OpenTargets" id="ENSG00000196570"/>
<dbReference type="PharmGKB" id="PA142671182"/>
<dbReference type="VEuPathDB" id="HostDB:ENSG00000196570"/>
<dbReference type="eggNOG" id="ENOG502S2A3">
    <property type="taxonomic scope" value="Eukaryota"/>
</dbReference>
<dbReference type="GeneTree" id="ENSGT00940000153664"/>
<dbReference type="HOGENOM" id="CLU_123405_1_0_1"/>
<dbReference type="InParanoid" id="P60673"/>
<dbReference type="OMA" id="VCVGHTP"/>
<dbReference type="OrthoDB" id="421374at2759"/>
<dbReference type="PAN-GO" id="P60673">
    <property type="GO annotations" value="4 GO annotations based on evolutionary models"/>
</dbReference>
<dbReference type="PhylomeDB" id="P60673"/>
<dbReference type="TreeFam" id="TF331744"/>
<dbReference type="PathwayCommons" id="P60673"/>
<dbReference type="BioGRID-ORCS" id="345456">
    <property type="hits" value="9 hits in 1148 CRISPR screens"/>
</dbReference>
<dbReference type="CD-CODE" id="91857CE7">
    <property type="entry name" value="Nucleolus"/>
</dbReference>
<dbReference type="ChiTaRS" id="PFN3">
    <property type="organism name" value="human"/>
</dbReference>
<dbReference type="GenomeRNAi" id="345456"/>
<dbReference type="Pharos" id="P60673">
    <property type="development level" value="Tdark"/>
</dbReference>
<dbReference type="PRO" id="PR:P60673"/>
<dbReference type="Proteomes" id="UP000005640">
    <property type="component" value="Chromosome 5"/>
</dbReference>
<dbReference type="RNAct" id="P60673">
    <property type="molecule type" value="protein"/>
</dbReference>
<dbReference type="Bgee" id="ENSG00000196570">
    <property type="expression patterns" value="Expressed in male germ line stem cell (sensu Vertebrata) in testis and 17 other cell types or tissues"/>
</dbReference>
<dbReference type="GO" id="GO:0005737">
    <property type="term" value="C:cytoplasm"/>
    <property type="evidence" value="ECO:0000318"/>
    <property type="project" value="GO_Central"/>
</dbReference>
<dbReference type="GO" id="GO:0005856">
    <property type="term" value="C:cytoskeleton"/>
    <property type="evidence" value="ECO:0007669"/>
    <property type="project" value="UniProtKB-SubCell"/>
</dbReference>
<dbReference type="GO" id="GO:0005634">
    <property type="term" value="C:nucleus"/>
    <property type="evidence" value="ECO:0007669"/>
    <property type="project" value="UniProtKB-SubCell"/>
</dbReference>
<dbReference type="GO" id="GO:0003779">
    <property type="term" value="F:actin binding"/>
    <property type="evidence" value="ECO:0000318"/>
    <property type="project" value="GO_Central"/>
</dbReference>
<dbReference type="GO" id="GO:0008289">
    <property type="term" value="F:lipid binding"/>
    <property type="evidence" value="ECO:0007669"/>
    <property type="project" value="UniProtKB-KW"/>
</dbReference>
<dbReference type="GO" id="GO:0030036">
    <property type="term" value="P:actin cytoskeleton organization"/>
    <property type="evidence" value="ECO:0007669"/>
    <property type="project" value="InterPro"/>
</dbReference>
<dbReference type="GO" id="GO:0032233">
    <property type="term" value="P:positive regulation of actin filament bundle assembly"/>
    <property type="evidence" value="ECO:0000318"/>
    <property type="project" value="GO_Central"/>
</dbReference>
<dbReference type="GO" id="GO:0030833">
    <property type="term" value="P:regulation of actin filament polymerization"/>
    <property type="evidence" value="ECO:0000318"/>
    <property type="project" value="GO_Central"/>
</dbReference>
<dbReference type="CDD" id="cd00148">
    <property type="entry name" value="PROF"/>
    <property type="match status" value="1"/>
</dbReference>
<dbReference type="FunFam" id="3.30.450.30:FF:000010">
    <property type="entry name" value="Profilin"/>
    <property type="match status" value="1"/>
</dbReference>
<dbReference type="Gene3D" id="3.30.450.30">
    <property type="entry name" value="Dynein light chain 2a, cytoplasmic"/>
    <property type="match status" value="1"/>
</dbReference>
<dbReference type="InterPro" id="IPR048278">
    <property type="entry name" value="PFN"/>
</dbReference>
<dbReference type="InterPro" id="IPR005455">
    <property type="entry name" value="PFN_euk"/>
</dbReference>
<dbReference type="InterPro" id="IPR036140">
    <property type="entry name" value="PFN_sf"/>
</dbReference>
<dbReference type="InterPro" id="IPR005454">
    <property type="entry name" value="Profilin1/2/3_vertebrate"/>
</dbReference>
<dbReference type="PANTHER" id="PTHR13936">
    <property type="entry name" value="PROFILIN"/>
    <property type="match status" value="1"/>
</dbReference>
<dbReference type="PANTHER" id="PTHR13936:SF2">
    <property type="entry name" value="PROFILIN-3"/>
    <property type="match status" value="1"/>
</dbReference>
<dbReference type="Pfam" id="PF00235">
    <property type="entry name" value="Profilin"/>
    <property type="match status" value="1"/>
</dbReference>
<dbReference type="PRINTS" id="PR01639">
    <property type="entry name" value="PROFILINMAML"/>
</dbReference>
<dbReference type="SMART" id="SM00392">
    <property type="entry name" value="PROF"/>
    <property type="match status" value="1"/>
</dbReference>
<dbReference type="SUPFAM" id="SSF55770">
    <property type="entry name" value="Profilin (actin-binding protein)"/>
    <property type="match status" value="1"/>
</dbReference>
<organism>
    <name type="scientific">Homo sapiens</name>
    <name type="common">Human</name>
    <dbReference type="NCBI Taxonomy" id="9606"/>
    <lineage>
        <taxon>Eukaryota</taxon>
        <taxon>Metazoa</taxon>
        <taxon>Chordata</taxon>
        <taxon>Craniata</taxon>
        <taxon>Vertebrata</taxon>
        <taxon>Euteleostomi</taxon>
        <taxon>Mammalia</taxon>
        <taxon>Eutheria</taxon>
        <taxon>Euarchontoglires</taxon>
        <taxon>Primates</taxon>
        <taxon>Haplorrhini</taxon>
        <taxon>Catarrhini</taxon>
        <taxon>Hominidae</taxon>
        <taxon>Homo</taxon>
    </lineage>
</organism>